<dbReference type="EC" id="2.7.11.1" evidence="3"/>
<dbReference type="EMBL" id="AB005240">
    <property type="protein sequence ID" value="BAB08374.1"/>
    <property type="molecule type" value="Genomic_DNA"/>
</dbReference>
<dbReference type="EMBL" id="AL163002">
    <property type="protein sequence ID" value="CAB86081.1"/>
    <property type="molecule type" value="Genomic_DNA"/>
</dbReference>
<dbReference type="EMBL" id="CP002688">
    <property type="protein sequence ID" value="AED90560.1"/>
    <property type="molecule type" value="Genomic_DNA"/>
</dbReference>
<dbReference type="EMBL" id="AY093212">
    <property type="protein sequence ID" value="AAM13211.1"/>
    <property type="molecule type" value="mRNA"/>
</dbReference>
<dbReference type="EMBL" id="BT008791">
    <property type="protein sequence ID" value="AAP68230.1"/>
    <property type="molecule type" value="mRNA"/>
</dbReference>
<dbReference type="EMBL" id="AK227062">
    <property type="protein sequence ID" value="BAE99121.1"/>
    <property type="molecule type" value="mRNA"/>
</dbReference>
<dbReference type="PIR" id="T48335">
    <property type="entry name" value="T48335"/>
</dbReference>
<dbReference type="RefSeq" id="NP_195934.1">
    <property type="nucleotide sequence ID" value="NM_120392.4"/>
</dbReference>
<dbReference type="SMR" id="Q9LYX1"/>
<dbReference type="FunCoup" id="Q9LYX1">
    <property type="interactions" value="5"/>
</dbReference>
<dbReference type="STRING" id="3702.Q9LYX1"/>
<dbReference type="GlyCosmos" id="Q9LYX1">
    <property type="glycosylation" value="1 site, No reported glycans"/>
</dbReference>
<dbReference type="GlyGen" id="Q9LYX1">
    <property type="glycosylation" value="1 site"/>
</dbReference>
<dbReference type="PaxDb" id="3702-AT5G03140.1"/>
<dbReference type="ProteomicsDB" id="238779"/>
<dbReference type="EnsemblPlants" id="AT5G03140.1">
    <property type="protein sequence ID" value="AT5G03140.1"/>
    <property type="gene ID" value="AT5G03140"/>
</dbReference>
<dbReference type="GeneID" id="831590"/>
<dbReference type="Gramene" id="AT5G03140.1">
    <property type="protein sequence ID" value="AT5G03140.1"/>
    <property type="gene ID" value="AT5G03140"/>
</dbReference>
<dbReference type="KEGG" id="ath:AT5G03140"/>
<dbReference type="Araport" id="AT5G03140"/>
<dbReference type="TAIR" id="AT5G03140">
    <property type="gene designation" value="LECRK-VIII.2"/>
</dbReference>
<dbReference type="eggNOG" id="ENOG502QT3J">
    <property type="taxonomic scope" value="Eukaryota"/>
</dbReference>
<dbReference type="HOGENOM" id="CLU_000288_62_6_1"/>
<dbReference type="InParanoid" id="Q9LYX1"/>
<dbReference type="OMA" id="IIWVYSK"/>
<dbReference type="PhylomeDB" id="Q9LYX1"/>
<dbReference type="PRO" id="PR:Q9LYX1"/>
<dbReference type="Proteomes" id="UP000006548">
    <property type="component" value="Chromosome 5"/>
</dbReference>
<dbReference type="ExpressionAtlas" id="Q9LYX1">
    <property type="expression patterns" value="baseline and differential"/>
</dbReference>
<dbReference type="GO" id="GO:0005886">
    <property type="term" value="C:plasma membrane"/>
    <property type="evidence" value="ECO:0000250"/>
    <property type="project" value="UniProtKB"/>
</dbReference>
<dbReference type="GO" id="GO:0005524">
    <property type="term" value="F:ATP binding"/>
    <property type="evidence" value="ECO:0007669"/>
    <property type="project" value="UniProtKB-KW"/>
</dbReference>
<dbReference type="GO" id="GO:0030246">
    <property type="term" value="F:carbohydrate binding"/>
    <property type="evidence" value="ECO:0007669"/>
    <property type="project" value="UniProtKB-KW"/>
</dbReference>
<dbReference type="GO" id="GO:0106310">
    <property type="term" value="F:protein serine kinase activity"/>
    <property type="evidence" value="ECO:0007669"/>
    <property type="project" value="RHEA"/>
</dbReference>
<dbReference type="GO" id="GO:0004674">
    <property type="term" value="F:protein serine/threonine kinase activity"/>
    <property type="evidence" value="ECO:0007669"/>
    <property type="project" value="UniProtKB-KW"/>
</dbReference>
<dbReference type="GO" id="GO:0002229">
    <property type="term" value="P:defense response to oomycetes"/>
    <property type="evidence" value="ECO:0000315"/>
    <property type="project" value="UniProtKB"/>
</dbReference>
<dbReference type="CDD" id="cd06899">
    <property type="entry name" value="lectin_legume_LecRK_Arcelin_ConA"/>
    <property type="match status" value="1"/>
</dbReference>
<dbReference type="CDD" id="cd14066">
    <property type="entry name" value="STKc_IRAK"/>
    <property type="match status" value="1"/>
</dbReference>
<dbReference type="FunFam" id="1.10.510.10:FF:000342">
    <property type="entry name" value="L-type lectin-domain containing receptor kinase VIII.1"/>
    <property type="match status" value="1"/>
</dbReference>
<dbReference type="FunFam" id="2.60.120.200:FF:000141">
    <property type="entry name" value="L-type lectin-domain containing receptor kinase VIII.1"/>
    <property type="match status" value="1"/>
</dbReference>
<dbReference type="FunFam" id="3.30.200.20:FF:000372">
    <property type="entry name" value="L-type lectin-domain containing receptor kinase VIII.1"/>
    <property type="match status" value="1"/>
</dbReference>
<dbReference type="Gene3D" id="2.60.120.200">
    <property type="match status" value="1"/>
</dbReference>
<dbReference type="Gene3D" id="3.30.200.20">
    <property type="entry name" value="Phosphorylase Kinase, domain 1"/>
    <property type="match status" value="1"/>
</dbReference>
<dbReference type="Gene3D" id="1.10.510.10">
    <property type="entry name" value="Transferase(Phosphotransferase) domain 1"/>
    <property type="match status" value="1"/>
</dbReference>
<dbReference type="InterPro" id="IPR013320">
    <property type="entry name" value="ConA-like_dom_sf"/>
</dbReference>
<dbReference type="InterPro" id="IPR011009">
    <property type="entry name" value="Kinase-like_dom_sf"/>
</dbReference>
<dbReference type="InterPro" id="IPR050528">
    <property type="entry name" value="L-type_Lectin-RKs"/>
</dbReference>
<dbReference type="InterPro" id="IPR019825">
    <property type="entry name" value="Lectin_legB_Mn/Ca_BS"/>
</dbReference>
<dbReference type="InterPro" id="IPR001220">
    <property type="entry name" value="Legume_lectin_dom"/>
</dbReference>
<dbReference type="InterPro" id="IPR000719">
    <property type="entry name" value="Prot_kinase_dom"/>
</dbReference>
<dbReference type="InterPro" id="IPR017441">
    <property type="entry name" value="Protein_kinase_ATP_BS"/>
</dbReference>
<dbReference type="InterPro" id="IPR008271">
    <property type="entry name" value="Ser/Thr_kinase_AS"/>
</dbReference>
<dbReference type="PANTHER" id="PTHR27007">
    <property type="match status" value="1"/>
</dbReference>
<dbReference type="Pfam" id="PF00139">
    <property type="entry name" value="Lectin_legB"/>
    <property type="match status" value="1"/>
</dbReference>
<dbReference type="Pfam" id="PF00069">
    <property type="entry name" value="Pkinase"/>
    <property type="match status" value="1"/>
</dbReference>
<dbReference type="SMART" id="SM00220">
    <property type="entry name" value="S_TKc"/>
    <property type="match status" value="1"/>
</dbReference>
<dbReference type="SUPFAM" id="SSF49899">
    <property type="entry name" value="Concanavalin A-like lectins/glucanases"/>
    <property type="match status" value="1"/>
</dbReference>
<dbReference type="SUPFAM" id="SSF56112">
    <property type="entry name" value="Protein kinase-like (PK-like)"/>
    <property type="match status" value="1"/>
</dbReference>
<dbReference type="PROSITE" id="PS00307">
    <property type="entry name" value="LECTIN_LEGUME_BETA"/>
    <property type="match status" value="1"/>
</dbReference>
<dbReference type="PROSITE" id="PS00107">
    <property type="entry name" value="PROTEIN_KINASE_ATP"/>
    <property type="match status" value="1"/>
</dbReference>
<dbReference type="PROSITE" id="PS50011">
    <property type="entry name" value="PROTEIN_KINASE_DOM"/>
    <property type="match status" value="1"/>
</dbReference>
<dbReference type="PROSITE" id="PS00108">
    <property type="entry name" value="PROTEIN_KINASE_ST"/>
    <property type="match status" value="1"/>
</dbReference>
<comment type="function">
    <text evidence="5">Involved in resistance response to the pathogenic oomycetes Phytophthora infestans and Phytophthora capsici.</text>
</comment>
<comment type="catalytic activity">
    <reaction evidence="3">
        <text>L-seryl-[protein] + ATP = O-phospho-L-seryl-[protein] + ADP + H(+)</text>
        <dbReference type="Rhea" id="RHEA:17989"/>
        <dbReference type="Rhea" id="RHEA-COMP:9863"/>
        <dbReference type="Rhea" id="RHEA-COMP:11604"/>
        <dbReference type="ChEBI" id="CHEBI:15378"/>
        <dbReference type="ChEBI" id="CHEBI:29999"/>
        <dbReference type="ChEBI" id="CHEBI:30616"/>
        <dbReference type="ChEBI" id="CHEBI:83421"/>
        <dbReference type="ChEBI" id="CHEBI:456216"/>
        <dbReference type="EC" id="2.7.11.1"/>
    </reaction>
</comment>
<comment type="catalytic activity">
    <reaction evidence="3">
        <text>L-threonyl-[protein] + ATP = O-phospho-L-threonyl-[protein] + ADP + H(+)</text>
        <dbReference type="Rhea" id="RHEA:46608"/>
        <dbReference type="Rhea" id="RHEA-COMP:11060"/>
        <dbReference type="Rhea" id="RHEA-COMP:11605"/>
        <dbReference type="ChEBI" id="CHEBI:15378"/>
        <dbReference type="ChEBI" id="CHEBI:30013"/>
        <dbReference type="ChEBI" id="CHEBI:30616"/>
        <dbReference type="ChEBI" id="CHEBI:61977"/>
        <dbReference type="ChEBI" id="CHEBI:456216"/>
        <dbReference type="EC" id="2.7.11.1"/>
    </reaction>
</comment>
<comment type="subcellular location">
    <subcellularLocation>
        <location evidence="1">Cell membrane</location>
        <topology evidence="2">Single-pass type I membrane protein</topology>
    </subcellularLocation>
</comment>
<comment type="disruption phenotype">
    <text evidence="5">Increased susceptibility to the oomycetes Phytophthora brassicae and Phytophthora capsici.</text>
</comment>
<comment type="similarity">
    <text evidence="7">In the C-terminal section; belongs to the protein kinase superfamily. Ser/Thr protein kinase family.</text>
</comment>
<comment type="similarity">
    <text evidence="7">In the N-terminal section; belongs to the leguminous lectin family.</text>
</comment>
<proteinExistence type="evidence at transcript level"/>
<protein>
    <recommendedName>
        <fullName evidence="6">L-type lectin-domain containing receptor kinase VIII.2</fullName>
        <shortName evidence="6">LecRK-VIII.2</shortName>
        <ecNumber evidence="3">2.7.11.1</ecNumber>
    </recommendedName>
</protein>
<gene>
    <name evidence="6" type="primary">LECRK82</name>
    <name evidence="8" type="ordered locus">At5g03140</name>
    <name evidence="9" type="ORF">F15A17.170</name>
</gene>
<reference key="1">
    <citation type="journal article" date="1997" name="DNA Res.">
        <title>Structural analysis of Arabidopsis thaliana chromosome 5. I. Sequence features of the 1.6 Mb regions covered by twenty physically assigned P1 clones.</title>
        <authorList>
            <person name="Sato S."/>
            <person name="Kotani H."/>
            <person name="Nakamura Y."/>
            <person name="Kaneko T."/>
            <person name="Asamizu E."/>
            <person name="Fukami M."/>
            <person name="Miyajima N."/>
            <person name="Tabata S."/>
        </authorList>
    </citation>
    <scope>NUCLEOTIDE SEQUENCE [LARGE SCALE GENOMIC DNA]</scope>
    <source>
        <strain>cv. Columbia</strain>
    </source>
</reference>
<reference key="2">
    <citation type="journal article" date="2000" name="Nature">
        <title>Sequence and analysis of chromosome 5 of the plant Arabidopsis thaliana.</title>
        <authorList>
            <person name="Tabata S."/>
            <person name="Kaneko T."/>
            <person name="Nakamura Y."/>
            <person name="Kotani H."/>
            <person name="Kato T."/>
            <person name="Asamizu E."/>
            <person name="Miyajima N."/>
            <person name="Sasamoto S."/>
            <person name="Kimura T."/>
            <person name="Hosouchi T."/>
            <person name="Kawashima K."/>
            <person name="Kohara M."/>
            <person name="Matsumoto M."/>
            <person name="Matsuno A."/>
            <person name="Muraki A."/>
            <person name="Nakayama S."/>
            <person name="Nakazaki N."/>
            <person name="Naruo K."/>
            <person name="Okumura S."/>
            <person name="Shinpo S."/>
            <person name="Takeuchi C."/>
            <person name="Wada T."/>
            <person name="Watanabe A."/>
            <person name="Yamada M."/>
            <person name="Yasuda M."/>
            <person name="Sato S."/>
            <person name="de la Bastide M."/>
            <person name="Huang E."/>
            <person name="Spiegel L."/>
            <person name="Gnoj L."/>
            <person name="O'Shaughnessy A."/>
            <person name="Preston R."/>
            <person name="Habermann K."/>
            <person name="Murray J."/>
            <person name="Johnson D."/>
            <person name="Rohlfing T."/>
            <person name="Nelson J."/>
            <person name="Stoneking T."/>
            <person name="Pepin K."/>
            <person name="Spieth J."/>
            <person name="Sekhon M."/>
            <person name="Armstrong J."/>
            <person name="Becker M."/>
            <person name="Belter E."/>
            <person name="Cordum H."/>
            <person name="Cordes M."/>
            <person name="Courtney L."/>
            <person name="Courtney W."/>
            <person name="Dante M."/>
            <person name="Du H."/>
            <person name="Edwards J."/>
            <person name="Fryman J."/>
            <person name="Haakensen B."/>
            <person name="Lamar E."/>
            <person name="Latreille P."/>
            <person name="Leonard S."/>
            <person name="Meyer R."/>
            <person name="Mulvaney E."/>
            <person name="Ozersky P."/>
            <person name="Riley A."/>
            <person name="Strowmatt C."/>
            <person name="Wagner-McPherson C."/>
            <person name="Wollam A."/>
            <person name="Yoakum M."/>
            <person name="Bell M."/>
            <person name="Dedhia N."/>
            <person name="Parnell L."/>
            <person name="Shah R."/>
            <person name="Rodriguez M."/>
            <person name="Hoon See L."/>
            <person name="Vil D."/>
            <person name="Baker J."/>
            <person name="Kirchoff K."/>
            <person name="Toth K."/>
            <person name="King L."/>
            <person name="Bahret A."/>
            <person name="Miller B."/>
            <person name="Marra M.A."/>
            <person name="Martienssen R."/>
            <person name="McCombie W.R."/>
            <person name="Wilson R.K."/>
            <person name="Murphy G."/>
            <person name="Bancroft I."/>
            <person name="Volckaert G."/>
            <person name="Wambutt R."/>
            <person name="Duesterhoeft A."/>
            <person name="Stiekema W."/>
            <person name="Pohl T."/>
            <person name="Entian K.-D."/>
            <person name="Terryn N."/>
            <person name="Hartley N."/>
            <person name="Bent E."/>
            <person name="Johnson S."/>
            <person name="Langham S.-A."/>
            <person name="McCullagh B."/>
            <person name="Robben J."/>
            <person name="Grymonprez B."/>
            <person name="Zimmermann W."/>
            <person name="Ramsperger U."/>
            <person name="Wedler H."/>
            <person name="Balke K."/>
            <person name="Wedler E."/>
            <person name="Peters S."/>
            <person name="van Staveren M."/>
            <person name="Dirkse W."/>
            <person name="Mooijman P."/>
            <person name="Klein Lankhorst R."/>
            <person name="Weitzenegger T."/>
            <person name="Bothe G."/>
            <person name="Rose M."/>
            <person name="Hauf J."/>
            <person name="Berneiser S."/>
            <person name="Hempel S."/>
            <person name="Feldpausch M."/>
            <person name="Lamberth S."/>
            <person name="Villarroel R."/>
            <person name="Gielen J."/>
            <person name="Ardiles W."/>
            <person name="Bents O."/>
            <person name="Lemcke K."/>
            <person name="Kolesov G."/>
            <person name="Mayer K.F.X."/>
            <person name="Rudd S."/>
            <person name="Schoof H."/>
            <person name="Schueller C."/>
            <person name="Zaccaria P."/>
            <person name="Mewes H.-W."/>
            <person name="Bevan M."/>
            <person name="Fransz P.F."/>
        </authorList>
    </citation>
    <scope>NUCLEOTIDE SEQUENCE [LARGE SCALE GENOMIC DNA]</scope>
    <source>
        <strain>cv. Columbia</strain>
    </source>
</reference>
<reference key="3">
    <citation type="journal article" date="2017" name="Plant J.">
        <title>Araport11: a complete reannotation of the Arabidopsis thaliana reference genome.</title>
        <authorList>
            <person name="Cheng C.Y."/>
            <person name="Krishnakumar V."/>
            <person name="Chan A.P."/>
            <person name="Thibaud-Nissen F."/>
            <person name="Schobel S."/>
            <person name="Town C.D."/>
        </authorList>
    </citation>
    <scope>GENOME REANNOTATION</scope>
    <source>
        <strain>cv. Columbia</strain>
    </source>
</reference>
<reference key="4">
    <citation type="journal article" date="2003" name="Science">
        <title>Empirical analysis of transcriptional activity in the Arabidopsis genome.</title>
        <authorList>
            <person name="Yamada K."/>
            <person name="Lim J."/>
            <person name="Dale J.M."/>
            <person name="Chen H."/>
            <person name="Shinn P."/>
            <person name="Palm C.J."/>
            <person name="Southwick A.M."/>
            <person name="Wu H.C."/>
            <person name="Kim C.J."/>
            <person name="Nguyen M."/>
            <person name="Pham P.K."/>
            <person name="Cheuk R.F."/>
            <person name="Karlin-Newmann G."/>
            <person name="Liu S.X."/>
            <person name="Lam B."/>
            <person name="Sakano H."/>
            <person name="Wu T."/>
            <person name="Yu G."/>
            <person name="Miranda M."/>
            <person name="Quach H.L."/>
            <person name="Tripp M."/>
            <person name="Chang C.H."/>
            <person name="Lee J.M."/>
            <person name="Toriumi M.J."/>
            <person name="Chan M.M."/>
            <person name="Tang C.C."/>
            <person name="Onodera C.S."/>
            <person name="Deng J.M."/>
            <person name="Akiyama K."/>
            <person name="Ansari Y."/>
            <person name="Arakawa T."/>
            <person name="Banh J."/>
            <person name="Banno F."/>
            <person name="Bowser L."/>
            <person name="Brooks S.Y."/>
            <person name="Carninci P."/>
            <person name="Chao Q."/>
            <person name="Choy N."/>
            <person name="Enju A."/>
            <person name="Goldsmith A.D."/>
            <person name="Gurjal M."/>
            <person name="Hansen N.F."/>
            <person name="Hayashizaki Y."/>
            <person name="Johnson-Hopson C."/>
            <person name="Hsuan V.W."/>
            <person name="Iida K."/>
            <person name="Karnes M."/>
            <person name="Khan S."/>
            <person name="Koesema E."/>
            <person name="Ishida J."/>
            <person name="Jiang P.X."/>
            <person name="Jones T."/>
            <person name="Kawai J."/>
            <person name="Kamiya A."/>
            <person name="Meyers C."/>
            <person name="Nakajima M."/>
            <person name="Narusaka M."/>
            <person name="Seki M."/>
            <person name="Sakurai T."/>
            <person name="Satou M."/>
            <person name="Tamse R."/>
            <person name="Vaysberg M."/>
            <person name="Wallender E.K."/>
            <person name="Wong C."/>
            <person name="Yamamura Y."/>
            <person name="Yuan S."/>
            <person name="Shinozaki K."/>
            <person name="Davis R.W."/>
            <person name="Theologis A."/>
            <person name="Ecker J.R."/>
        </authorList>
    </citation>
    <scope>NUCLEOTIDE SEQUENCE [LARGE SCALE MRNA]</scope>
    <source>
        <strain>cv. Columbia</strain>
    </source>
</reference>
<reference key="5">
    <citation type="submission" date="2006-07" db="EMBL/GenBank/DDBJ databases">
        <title>Large-scale analysis of RIKEN Arabidopsis full-length (RAFL) cDNAs.</title>
        <authorList>
            <person name="Totoki Y."/>
            <person name="Seki M."/>
            <person name="Ishida J."/>
            <person name="Nakajima M."/>
            <person name="Enju A."/>
            <person name="Kamiya A."/>
            <person name="Narusaka M."/>
            <person name="Shin-i T."/>
            <person name="Nakagawa M."/>
            <person name="Sakamoto N."/>
            <person name="Oishi K."/>
            <person name="Kohara Y."/>
            <person name="Kobayashi M."/>
            <person name="Toyoda A."/>
            <person name="Sakaki Y."/>
            <person name="Sakurai T."/>
            <person name="Iida K."/>
            <person name="Akiyama K."/>
            <person name="Satou M."/>
            <person name="Toyoda T."/>
            <person name="Konagaya A."/>
            <person name="Carninci P."/>
            <person name="Kawai J."/>
            <person name="Hayashizaki Y."/>
            <person name="Shinozaki K."/>
        </authorList>
    </citation>
    <scope>NUCLEOTIDE SEQUENCE [LARGE SCALE MRNA]</scope>
    <source>
        <strain>cv. Columbia</strain>
    </source>
</reference>
<reference key="6">
    <citation type="journal article" date="2002" name="Crit. Rev. Plant Sci.">
        <title>Lectin receptor kinases in plants.</title>
        <authorList>
            <person name="Barre A."/>
            <person name="Herve C."/>
            <person name="Lescure B."/>
            <person name="Rouge P."/>
        </authorList>
    </citation>
    <scope>GENE FAMILY</scope>
</reference>
<reference key="7">
    <citation type="journal article" date="2009" name="J. Exp. Bot.">
        <title>Arabidopsis L-type lectin receptor kinases: phylogeny, classification, and expression profiles.</title>
        <authorList>
            <person name="Bouwmeester K."/>
            <person name="Govers F."/>
        </authorList>
    </citation>
    <scope>GENE FAMILY</scope>
    <scope>NOMENCLATURE</scope>
</reference>
<reference key="8">
    <citation type="journal article" date="2014" name="Mol. Plant Microbe Interact.">
        <title>Phenotypic analyses of Arabidopsis T-DNA insertion lines and expression profiling reveal that multiple L-type lectin receptor kinases are involved in plant immunity.</title>
        <authorList>
            <person name="Wang Y."/>
            <person name="Bouwmeester K."/>
            <person name="Beseh P."/>
            <person name="Shan W."/>
            <person name="Govers F."/>
        </authorList>
    </citation>
    <scope>FUNCTION</scope>
    <scope>DISRUPTION PHENOTYPE</scope>
    <source>
        <strain>cv. Columbia</strain>
    </source>
</reference>
<feature type="signal peptide" evidence="2">
    <location>
        <begin position="1"/>
        <end position="30"/>
    </location>
</feature>
<feature type="chain" id="PRO_0000403102" description="L-type lectin-domain containing receptor kinase VIII.2">
    <location>
        <begin position="31"/>
        <end position="711"/>
    </location>
</feature>
<feature type="topological domain" description="Extracellular" evidence="2">
    <location>
        <begin position="31"/>
        <end position="315"/>
    </location>
</feature>
<feature type="transmembrane region" description="Helical" evidence="2">
    <location>
        <begin position="316"/>
        <end position="336"/>
    </location>
</feature>
<feature type="topological domain" description="Cytoplasmic" evidence="2">
    <location>
        <begin position="337"/>
        <end position="711"/>
    </location>
</feature>
<feature type="domain" description="Protein kinase" evidence="3">
    <location>
        <begin position="374"/>
        <end position="656"/>
    </location>
</feature>
<feature type="region of interest" description="Legume-lectin like" evidence="2">
    <location>
        <begin position="35"/>
        <end position="260"/>
    </location>
</feature>
<feature type="region of interest" description="Disordered" evidence="4">
    <location>
        <begin position="265"/>
        <end position="306"/>
    </location>
</feature>
<feature type="compositionally biased region" description="Pro residues" evidence="4">
    <location>
        <begin position="269"/>
        <end position="281"/>
    </location>
</feature>
<feature type="compositionally biased region" description="Low complexity" evidence="4">
    <location>
        <begin position="282"/>
        <end position="291"/>
    </location>
</feature>
<feature type="active site" description="Proton acceptor" evidence="3">
    <location>
        <position position="497"/>
    </location>
</feature>
<feature type="binding site" evidence="3">
    <location>
        <begin position="380"/>
        <end position="388"/>
    </location>
    <ligand>
        <name>ATP</name>
        <dbReference type="ChEBI" id="CHEBI:30616"/>
    </ligand>
</feature>
<feature type="binding site" evidence="3">
    <location>
        <position position="403"/>
    </location>
    <ligand>
        <name>ATP</name>
        <dbReference type="ChEBI" id="CHEBI:30616"/>
    </ligand>
</feature>
<feature type="glycosylation site" description="N-linked (GlcNAc...) asparagine" evidence="2">
    <location>
        <position position="57"/>
    </location>
</feature>
<name>LRK82_ARATH</name>
<accession>Q9LYX1</accession>
<organism>
    <name type="scientific">Arabidopsis thaliana</name>
    <name type="common">Mouse-ear cress</name>
    <dbReference type="NCBI Taxonomy" id="3702"/>
    <lineage>
        <taxon>Eukaryota</taxon>
        <taxon>Viridiplantae</taxon>
        <taxon>Streptophyta</taxon>
        <taxon>Embryophyta</taxon>
        <taxon>Tracheophyta</taxon>
        <taxon>Spermatophyta</taxon>
        <taxon>Magnoliopsida</taxon>
        <taxon>eudicotyledons</taxon>
        <taxon>Gunneridae</taxon>
        <taxon>Pentapetalae</taxon>
        <taxon>rosids</taxon>
        <taxon>malvids</taxon>
        <taxon>Brassicales</taxon>
        <taxon>Brassicaceae</taxon>
        <taxon>Camelineae</taxon>
        <taxon>Arabidopsis</taxon>
    </lineage>
</organism>
<sequence>MLKLPPRFFSVYSTLIHILASFLCSSDVRGDFPATRFDLGTLTLSSLKLLGDAHLNNGTIKLTRELSVPTSTAGKALYGKPVKFRHPETKSPASFTTYFSFSVTNLNPSSIGGGLAFVISPDEDYLGSTGGFLGLTEETGSGSGFVAVEFDTLMDVQFKDVNGNHVGLDLNAVVSAAVADLGNVDIDLKSGNAVNSWITYDGSGRVLTVYVSYSNLKPKSPILSVPLDLDRYVSDSMFVGFSGSTQGSTEIHSVDWWSFSSSFEESSESPPPMPNSPPPSSPSSSITPSLSTVRRKTADPSSSCRNKLCKKSPAAVAGVVTAGAFFLALFAGVIIWVYSKKIKYTRKSESLASEIMKSPREFTYKELKLATDCFSSSRVIGNGAFGTVYKGILQDSGEIIAIKRCSHISQGNTEFLSELSLIGTLRHRNLLRLQGYCREKGEILLIYDLMPNGSLDKALYESPTTLPWPHRRKILLGVASALAYLHQECENQIIHRDVKTSNIMLDANFNPKLGDFGLARQTEHDKSPDATAAAGTMGYLAPEYLLTGRATEKTDVFSYGAVVLEVCTGRRPITRPEPEPGLRPGLRSSLVDWVWGLYREGKLLTAVDERLSEFNPEEMSRVMMVGLACSQPDPVTRPTMRSVVQILVGEADVPEVPIAKPSSSMSFSTSELLLTLQDSVSDCNEVLAPISTTSCSSSEHDIFIVGKDRSV</sequence>
<evidence type="ECO:0000250" key="1">
    <source>
        <dbReference type="UniProtKB" id="Q9LSR8"/>
    </source>
</evidence>
<evidence type="ECO:0000255" key="2"/>
<evidence type="ECO:0000255" key="3">
    <source>
        <dbReference type="PROSITE-ProRule" id="PRU00159"/>
    </source>
</evidence>
<evidence type="ECO:0000256" key="4">
    <source>
        <dbReference type="SAM" id="MobiDB-lite"/>
    </source>
</evidence>
<evidence type="ECO:0000269" key="5">
    <source>
    </source>
</evidence>
<evidence type="ECO:0000303" key="6">
    <source>
    </source>
</evidence>
<evidence type="ECO:0000305" key="7"/>
<evidence type="ECO:0000312" key="8">
    <source>
        <dbReference type="Araport" id="AT5G03140"/>
    </source>
</evidence>
<evidence type="ECO:0000312" key="9">
    <source>
        <dbReference type="EMBL" id="CAB86081.1"/>
    </source>
</evidence>
<keyword id="KW-0067">ATP-binding</keyword>
<keyword id="KW-1003">Cell membrane</keyword>
<keyword id="KW-0325">Glycoprotein</keyword>
<keyword id="KW-0418">Kinase</keyword>
<keyword id="KW-0430">Lectin</keyword>
<keyword id="KW-0472">Membrane</keyword>
<keyword id="KW-0547">Nucleotide-binding</keyword>
<keyword id="KW-0611">Plant defense</keyword>
<keyword id="KW-0675">Receptor</keyword>
<keyword id="KW-1185">Reference proteome</keyword>
<keyword id="KW-0723">Serine/threonine-protein kinase</keyword>
<keyword id="KW-0732">Signal</keyword>
<keyword id="KW-0808">Transferase</keyword>
<keyword id="KW-0812">Transmembrane</keyword>
<keyword id="KW-1133">Transmembrane helix</keyword>